<protein>
    <recommendedName>
        <fullName evidence="8">Phospholipid phosphatase 3</fullName>
        <ecNumber evidence="1">3.1.3.-</ecNumber>
        <ecNumber evidence="1">3.1.3.4</ecNumber>
    </recommendedName>
    <alternativeName>
        <fullName>Differentially expressed in rat intestine 42</fullName>
        <shortName>Dri42</shortName>
    </alternativeName>
    <alternativeName>
        <fullName>Lipid phosphate phosphohydrolase 3</fullName>
    </alternativeName>
    <alternativeName>
        <fullName>PAP2-beta</fullName>
    </alternativeName>
    <alternativeName>
        <fullName>Phosphatidate phosphohydrolase type 2b</fullName>
    </alternativeName>
    <alternativeName>
        <fullName>Phosphatidic acid phosphatase 2b</fullName>
        <shortName>PAP-2b</shortName>
        <shortName>PAP2b</shortName>
    </alternativeName>
</protein>
<keyword id="KW-1003">Cell membrane</keyword>
<keyword id="KW-0256">Endoplasmic reticulum</keyword>
<keyword id="KW-0325">Glycoprotein</keyword>
<keyword id="KW-0333">Golgi apparatus</keyword>
<keyword id="KW-0378">Hydrolase</keyword>
<keyword id="KW-0443">Lipid metabolism</keyword>
<keyword id="KW-0472">Membrane</keyword>
<keyword id="KW-0597">Phosphoprotein</keyword>
<keyword id="KW-1185">Reference proteome</keyword>
<keyword id="KW-0812">Transmembrane</keyword>
<keyword id="KW-1133">Transmembrane helix</keyword>
<comment type="function">
    <text evidence="1 3">Magnesium-independent phospholipid phosphatase of the plasma membrane that catalyzes the dephosphorylation of a variety of glycerolipid and sphingolipid phosphate esters including phosphatidate/PA, lysophosphatidate/LPA, diacylglycerol pyrophosphate/DGPP, sphingosine 1-phosphate/S1P and ceramide 1-phosphate/C1P. Also acts on N-oleoyl ethanolamine phosphate/N-(9Z-octadecenoyl)-ethanolamine phosphate, a potential physiological compound. Has both an extracellular and an intracellular phosphatase activity, allowing the hydrolysis and the cellular uptake of these bioactive lipid mediators from the milieu, regulating signal transduction in different cellular processes. Through the dephosphorylation of extracellular sphingosine-1-phosphate and the regulation of its extra- and intracellular availability, plays a role in vascular homeostasis, regulating endothelial cell migration, adhesion, survival, proliferation and the production of pro-inflammatory cytokines (By similarity). By maintaining the appropriate levels of this lipid in the cerebellum, also ensure its proper development and function (By similarity). Through its intracellular lipid phosphatase activity may act in early compartments of the secretory pathway, regulating the formation of Golgi to endoplasmic reticulum retrograde transport carriers (By similarity).</text>
</comment>
<comment type="function">
    <text evidence="3">Independently of this phosphatase activity may also function in the Wnt signaling pathway and the stabilization of beta-catenin/CTNNB1, thereby regulating cell proliferation, migration and differentiation in angiogenesis or yet in tumor growth. Also plays a role in integrin-mediated cell-cell adhesion in angiogenesis.</text>
</comment>
<comment type="catalytic activity">
    <reaction evidence="1">
        <text>a 1,2-diacyl-sn-glycero-3-phosphate + H2O = a 1,2-diacyl-sn-glycerol + phosphate</text>
        <dbReference type="Rhea" id="RHEA:27429"/>
        <dbReference type="ChEBI" id="CHEBI:15377"/>
        <dbReference type="ChEBI" id="CHEBI:17815"/>
        <dbReference type="ChEBI" id="CHEBI:43474"/>
        <dbReference type="ChEBI" id="CHEBI:58608"/>
        <dbReference type="EC" id="3.1.3.4"/>
    </reaction>
    <physiologicalReaction direction="left-to-right" evidence="1">
        <dbReference type="Rhea" id="RHEA:27430"/>
    </physiologicalReaction>
</comment>
<comment type="catalytic activity">
    <reaction evidence="1">
        <text>1,2-dihexadecanoyl-sn-glycero-3-phosphate + H2O = 1,2-dihexadecanoyl-sn-glycerol + phosphate</text>
        <dbReference type="Rhea" id="RHEA:43236"/>
        <dbReference type="ChEBI" id="CHEBI:15377"/>
        <dbReference type="ChEBI" id="CHEBI:43474"/>
        <dbReference type="ChEBI" id="CHEBI:72859"/>
        <dbReference type="ChEBI" id="CHEBI:82929"/>
    </reaction>
    <physiologicalReaction direction="left-to-right" evidence="1">
        <dbReference type="Rhea" id="RHEA:43237"/>
    </physiologicalReaction>
</comment>
<comment type="catalytic activity">
    <reaction evidence="1">
        <text>1,2-di-(9Z-octadecenoyl)-sn-glycero-3-phosphate + H2O = 1,2-di-(9Z-octadecenoyl)-sn-glycerol + phosphate</text>
        <dbReference type="Rhea" id="RHEA:43244"/>
        <dbReference type="ChEBI" id="CHEBI:15377"/>
        <dbReference type="ChEBI" id="CHEBI:43474"/>
        <dbReference type="ChEBI" id="CHEBI:52333"/>
        <dbReference type="ChEBI" id="CHEBI:74546"/>
    </reaction>
    <physiologicalReaction direction="left-to-right" evidence="1">
        <dbReference type="Rhea" id="RHEA:43245"/>
    </physiologicalReaction>
</comment>
<comment type="catalytic activity">
    <reaction evidence="1">
        <text>a monoacyl-sn-glycero-3-phosphate + H2O = a monoacylglycerol + phosphate</text>
        <dbReference type="Rhea" id="RHEA:46736"/>
        <dbReference type="ChEBI" id="CHEBI:15377"/>
        <dbReference type="ChEBI" id="CHEBI:17408"/>
        <dbReference type="ChEBI" id="CHEBI:43474"/>
        <dbReference type="ChEBI" id="CHEBI:77589"/>
    </reaction>
    <physiologicalReaction direction="left-to-right" evidence="1">
        <dbReference type="Rhea" id="RHEA:46737"/>
    </physiologicalReaction>
</comment>
<comment type="catalytic activity">
    <reaction evidence="1">
        <text>(9Z)-octadecenoyl-sn-glycero-3-phosphate + H2O = (9Z-octadecenoyl)-glycerol + phosphate</text>
        <dbReference type="Rhea" id="RHEA:50884"/>
        <dbReference type="ChEBI" id="CHEBI:15377"/>
        <dbReference type="ChEBI" id="CHEBI:43474"/>
        <dbReference type="ChEBI" id="CHEBI:75937"/>
        <dbReference type="ChEBI" id="CHEBI:84973"/>
    </reaction>
    <physiologicalReaction direction="left-to-right" evidence="1">
        <dbReference type="Rhea" id="RHEA:50885"/>
    </physiologicalReaction>
</comment>
<comment type="catalytic activity">
    <reaction evidence="1">
        <text>sphing-4-enine 1-phosphate + H2O = sphing-4-enine + phosphate</text>
        <dbReference type="Rhea" id="RHEA:27518"/>
        <dbReference type="ChEBI" id="CHEBI:15377"/>
        <dbReference type="ChEBI" id="CHEBI:43474"/>
        <dbReference type="ChEBI" id="CHEBI:57756"/>
        <dbReference type="ChEBI" id="CHEBI:60119"/>
    </reaction>
    <physiologicalReaction direction="left-to-right" evidence="1">
        <dbReference type="Rhea" id="RHEA:27519"/>
    </physiologicalReaction>
</comment>
<comment type="catalytic activity">
    <reaction evidence="1">
        <text>an N-acylsphing-4-enine 1-phosphate + H2O = an N-acylsphing-4-enine + phosphate</text>
        <dbReference type="Rhea" id="RHEA:33743"/>
        <dbReference type="ChEBI" id="CHEBI:15377"/>
        <dbReference type="ChEBI" id="CHEBI:43474"/>
        <dbReference type="ChEBI" id="CHEBI:52639"/>
        <dbReference type="ChEBI" id="CHEBI:57674"/>
    </reaction>
    <physiologicalReaction direction="left-to-right" evidence="1">
        <dbReference type="Rhea" id="RHEA:33744"/>
    </physiologicalReaction>
</comment>
<comment type="catalytic activity">
    <reaction evidence="1">
        <text>N-(octanoyl)-sphing-4-enine-1-phosphate + H2O = N-octanoylsphing-4-enine + phosphate</text>
        <dbReference type="Rhea" id="RHEA:62040"/>
        <dbReference type="ChEBI" id="CHEBI:15377"/>
        <dbReference type="ChEBI" id="CHEBI:43474"/>
        <dbReference type="ChEBI" id="CHEBI:45815"/>
        <dbReference type="ChEBI" id="CHEBI:85376"/>
    </reaction>
    <physiologicalReaction direction="left-to-right" evidence="1">
        <dbReference type="Rhea" id="RHEA:62041"/>
    </physiologicalReaction>
</comment>
<comment type="catalytic activity">
    <reaction evidence="1">
        <text>N-(9Z-octadecenoyl)-ethanolamine phosphate + H2O = N-(9Z-octadecenoyl) ethanolamine + phosphate</text>
        <dbReference type="Rhea" id="RHEA:62160"/>
        <dbReference type="ChEBI" id="CHEBI:15377"/>
        <dbReference type="ChEBI" id="CHEBI:43474"/>
        <dbReference type="ChEBI" id="CHEBI:71466"/>
        <dbReference type="ChEBI" id="CHEBI:145465"/>
    </reaction>
    <physiologicalReaction direction="left-to-right" evidence="1">
        <dbReference type="Rhea" id="RHEA:62161"/>
    </physiologicalReaction>
</comment>
<comment type="activity regulation">
    <text evidence="1">Magnesium-independent phospholipid phosphatase. Insensitive to N-ethylmaleimide. Inhibited by sphingosine, zinc ions and modestly by propanolol.</text>
</comment>
<comment type="pathway">
    <text evidence="1">Lipid metabolism; phospholipid metabolism.</text>
</comment>
<comment type="subunit">
    <text evidence="1">Forms functional homodimers and homooligomers that are not required for substrate recognition and catalytic activity. Can also form heterooligomers with other PLPP2 and PLPP3. Interacts with CTNND1; negatively regulates the PLPP3-mediated stabilization of beta-catenin/CTNNB1.</text>
</comment>
<comment type="subcellular location">
    <subcellularLocation>
        <location evidence="1">Cell membrane</location>
        <topology evidence="7">Multi-pass membrane protein</topology>
    </subcellularLocation>
    <subcellularLocation>
        <location evidence="1">Basolateral cell membrane</location>
        <topology evidence="7">Multi-pass membrane protein</topology>
    </subcellularLocation>
    <subcellularLocation>
        <location evidence="7">Endoplasmic reticulum membrane</location>
        <topology evidence="7">Multi-pass membrane protein</topology>
    </subcellularLocation>
    <subcellularLocation>
        <location evidence="1">Endoplasmic reticulum-Golgi intermediate compartment membrane</location>
        <topology evidence="7">Multi-pass membrane protein</topology>
    </subcellularLocation>
    <subcellularLocation>
        <location evidence="1">Golgi apparatus membrane</location>
        <topology evidence="7">Multi-pass membrane protein</topology>
    </subcellularLocation>
    <subcellularLocation>
        <location evidence="1">Golgi apparatus</location>
        <location evidence="1">trans-Golgi network membrane</location>
        <topology evidence="7">Multi-pass membrane protein</topology>
    </subcellularLocation>
    <subcellularLocation>
        <location evidence="1">Membrane raft</location>
        <topology evidence="7">Multi-pass membrane protein</topology>
    </subcellularLocation>
    <text evidence="1">Cycles between the endoplasmic reticulum and the Golgi.</text>
</comment>
<comment type="tissue specificity">
    <text evidence="5 6">Detected in epithelial cells of intestinal mucosa, lung, liver and brain.</text>
</comment>
<comment type="developmental stage">
    <text evidence="6">Expression is increased during epithelial differentiation in intestinal mucosa as well as in kidney, liver and lung.</text>
</comment>
<comment type="domain">
    <text evidence="1">The integrin-binding motif mediates the binding to integrin alpha-5/beta-1 (ITGA5:ITGB1) and integrin alpha-V/beta-3 (ITGAV:ITGB3) and is required for the function in integrin-mediated cell-cell adhesion.</text>
</comment>
<comment type="domain">
    <text evidence="1">The dityrosine basolateral targeting motif mediates localization to the basolateral membrane in polarized cells.</text>
</comment>
<comment type="PTM">
    <text evidence="1 7">N-glycosylated (PubMed:8939937). Contains high-mannose oligosaccharides (By similarity).</text>
</comment>
<comment type="similarity">
    <text evidence="8">Belongs to the PA-phosphatase related phosphoesterase family.</text>
</comment>
<feature type="chain" id="PRO_0000220914" description="Phospholipid phosphatase 3">
    <location>
        <begin position="1"/>
        <end position="312"/>
    </location>
</feature>
<feature type="topological domain" description="Cytoplasmic" evidence="7">
    <location>
        <begin position="1"/>
        <end position="33"/>
    </location>
</feature>
<feature type="transmembrane region" description="Helical" evidence="4">
    <location>
        <begin position="34"/>
        <end position="54"/>
    </location>
</feature>
<feature type="topological domain" description="Extracellular" evidence="7">
    <location>
        <begin position="55"/>
        <end position="85"/>
    </location>
</feature>
<feature type="transmembrane region" description="Helical" evidence="4">
    <location>
        <begin position="86"/>
        <end position="106"/>
    </location>
</feature>
<feature type="topological domain" description="Cytoplasmic" evidence="7">
    <location>
        <begin position="107"/>
        <end position="123"/>
    </location>
</feature>
<feature type="transmembrane region" description="Helical" evidence="4">
    <location>
        <begin position="124"/>
        <end position="144"/>
    </location>
</feature>
<feature type="topological domain" description="Extracellular" evidence="7">
    <location>
        <begin position="145"/>
        <end position="194"/>
    </location>
</feature>
<feature type="transmembrane region" description="Helical" evidence="4">
    <location>
        <begin position="195"/>
        <end position="215"/>
    </location>
</feature>
<feature type="topological domain" description="Cytoplasmic" evidence="7">
    <location>
        <begin position="216"/>
        <end position="226"/>
    </location>
</feature>
<feature type="transmembrane region" description="Helical" evidence="4">
    <location>
        <begin position="227"/>
        <end position="244"/>
    </location>
</feature>
<feature type="topological domain" description="Extracellular" evidence="7">
    <location>
        <begin position="245"/>
        <end position="258"/>
    </location>
</feature>
<feature type="transmembrane region" description="Helical" evidence="4">
    <location>
        <begin position="259"/>
        <end position="279"/>
    </location>
</feature>
<feature type="topological domain" description="Cytoplasmic" evidence="7">
    <location>
        <begin position="280"/>
        <end position="312"/>
    </location>
</feature>
<feature type="region of interest" description="Phosphatase sequence motif I" evidence="2">
    <location>
        <begin position="149"/>
        <end position="157"/>
    </location>
</feature>
<feature type="region of interest" description="Phosphatase sequence motif II" evidence="2">
    <location>
        <begin position="197"/>
        <end position="200"/>
    </location>
</feature>
<feature type="region of interest" description="Phosphatase sequence motif III" evidence="2">
    <location>
        <begin position="245"/>
        <end position="256"/>
    </location>
</feature>
<feature type="region of interest" description="Mediates interaction with CTNND1" evidence="1">
    <location>
        <begin position="276"/>
        <end position="312"/>
    </location>
</feature>
<feature type="short sequence motif" description="Dityrosine basolateral targeting motif" evidence="1">
    <location>
        <begin position="109"/>
        <end position="110"/>
    </location>
</feature>
<feature type="short sequence motif" description="Integrin-binding motif" evidence="1">
    <location>
        <begin position="183"/>
        <end position="185"/>
    </location>
</feature>
<feature type="active site" description="Proton donors" evidence="2">
    <location>
        <position position="200"/>
    </location>
</feature>
<feature type="active site" description="Nucleophile" evidence="2">
    <location>
        <position position="252"/>
    </location>
</feature>
<feature type="site" description="Stabilizes the active site histidine for nucleophilic attack" evidence="2">
    <location>
        <position position="256"/>
    </location>
</feature>
<feature type="modified residue" description="Phosphoserine" evidence="1">
    <location>
        <position position="19"/>
    </location>
</feature>
<feature type="glycosylation site" description="N-linked (GlcNAc...) asparagine" evidence="4">
    <location>
        <position position="171"/>
    </location>
</feature>
<gene>
    <name evidence="9" type="primary">Plpp3</name>
    <name type="synonym">Lpp3</name>
    <name type="synonym">Ppap2b</name>
</gene>
<evidence type="ECO:0000250" key="1">
    <source>
        <dbReference type="UniProtKB" id="O14495"/>
    </source>
</evidence>
<evidence type="ECO:0000250" key="2">
    <source>
        <dbReference type="UniProtKB" id="O34349"/>
    </source>
</evidence>
<evidence type="ECO:0000250" key="3">
    <source>
        <dbReference type="UniProtKB" id="Q99JY8"/>
    </source>
</evidence>
<evidence type="ECO:0000255" key="4"/>
<evidence type="ECO:0000269" key="5">
    <source>
    </source>
</evidence>
<evidence type="ECO:0000269" key="6">
    <source>
    </source>
</evidence>
<evidence type="ECO:0000269" key="7">
    <source>
    </source>
</evidence>
<evidence type="ECO:0000305" key="8"/>
<evidence type="ECO:0000312" key="9">
    <source>
        <dbReference type="RGD" id="620454"/>
    </source>
</evidence>
<name>PLPP3_RAT</name>
<proteinExistence type="evidence at protein level"/>
<dbReference type="EC" id="3.1.3.-" evidence="1"/>
<dbReference type="EC" id="3.1.3.4" evidence="1"/>
<dbReference type="EMBL" id="Y07783">
    <property type="protein sequence ID" value="CAA69106.1"/>
    <property type="molecule type" value="mRNA"/>
</dbReference>
<dbReference type="FunCoup" id="P97544">
    <property type="interactions" value="1672"/>
</dbReference>
<dbReference type="STRING" id="10116.ENSRNOP00000011237"/>
<dbReference type="GlyCosmos" id="P97544">
    <property type="glycosylation" value="1 site, No reported glycans"/>
</dbReference>
<dbReference type="GlyGen" id="P97544">
    <property type="glycosylation" value="1 site"/>
</dbReference>
<dbReference type="iPTMnet" id="P97544"/>
<dbReference type="PhosphoSitePlus" id="P97544"/>
<dbReference type="PaxDb" id="10116-ENSRNOP00000011237"/>
<dbReference type="UCSC" id="RGD:620454">
    <property type="organism name" value="rat"/>
</dbReference>
<dbReference type="AGR" id="RGD:620454"/>
<dbReference type="RGD" id="620454">
    <property type="gene designation" value="Plpp3"/>
</dbReference>
<dbReference type="eggNOG" id="KOG3030">
    <property type="taxonomic scope" value="Eukaryota"/>
</dbReference>
<dbReference type="InParanoid" id="P97544"/>
<dbReference type="PhylomeDB" id="P97544"/>
<dbReference type="Reactome" id="R-RNO-9845614">
    <property type="pathway name" value="Sphingolipid catabolism"/>
</dbReference>
<dbReference type="UniPathway" id="UPA00085"/>
<dbReference type="PRO" id="PR:P97544"/>
<dbReference type="Proteomes" id="UP000002494">
    <property type="component" value="Unplaced"/>
</dbReference>
<dbReference type="GO" id="GO:0005912">
    <property type="term" value="C:adherens junction"/>
    <property type="evidence" value="ECO:0000266"/>
    <property type="project" value="RGD"/>
</dbReference>
<dbReference type="GO" id="GO:0016323">
    <property type="term" value="C:basolateral plasma membrane"/>
    <property type="evidence" value="ECO:0000266"/>
    <property type="project" value="RGD"/>
</dbReference>
<dbReference type="GO" id="GO:0070971">
    <property type="term" value="C:endoplasmic reticulum exit site"/>
    <property type="evidence" value="ECO:0000250"/>
    <property type="project" value="UniProtKB"/>
</dbReference>
<dbReference type="GO" id="GO:0005789">
    <property type="term" value="C:endoplasmic reticulum membrane"/>
    <property type="evidence" value="ECO:0000314"/>
    <property type="project" value="RGD"/>
</dbReference>
<dbReference type="GO" id="GO:0033116">
    <property type="term" value="C:endoplasmic reticulum-Golgi intermediate compartment membrane"/>
    <property type="evidence" value="ECO:0000250"/>
    <property type="project" value="UniProtKB"/>
</dbReference>
<dbReference type="GO" id="GO:0005794">
    <property type="term" value="C:Golgi apparatus"/>
    <property type="evidence" value="ECO:0000250"/>
    <property type="project" value="UniProtKB"/>
</dbReference>
<dbReference type="GO" id="GO:0000139">
    <property type="term" value="C:Golgi membrane"/>
    <property type="evidence" value="ECO:0007669"/>
    <property type="project" value="UniProtKB-SubCell"/>
</dbReference>
<dbReference type="GO" id="GO:0016020">
    <property type="term" value="C:membrane"/>
    <property type="evidence" value="ECO:0000250"/>
    <property type="project" value="UniProtKB"/>
</dbReference>
<dbReference type="GO" id="GO:0045121">
    <property type="term" value="C:membrane raft"/>
    <property type="evidence" value="ECO:0000250"/>
    <property type="project" value="UniProtKB"/>
</dbReference>
<dbReference type="GO" id="GO:0005886">
    <property type="term" value="C:plasma membrane"/>
    <property type="evidence" value="ECO:0000266"/>
    <property type="project" value="RGD"/>
</dbReference>
<dbReference type="GO" id="GO:0005802">
    <property type="term" value="C:trans-Golgi network"/>
    <property type="evidence" value="ECO:0000250"/>
    <property type="project" value="UniProtKB"/>
</dbReference>
<dbReference type="GO" id="GO:0106235">
    <property type="term" value="F:ceramide-1-phosphate phosphatase activity"/>
    <property type="evidence" value="ECO:0000250"/>
    <property type="project" value="UniProtKB"/>
</dbReference>
<dbReference type="GO" id="GO:0070097">
    <property type="term" value="F:delta-catenin binding"/>
    <property type="evidence" value="ECO:0000266"/>
    <property type="project" value="RGD"/>
</dbReference>
<dbReference type="GO" id="GO:0005178">
    <property type="term" value="F:integrin binding"/>
    <property type="evidence" value="ECO:0000250"/>
    <property type="project" value="UniProtKB"/>
</dbReference>
<dbReference type="GO" id="GO:0042577">
    <property type="term" value="F:lipid phosphatase activity"/>
    <property type="evidence" value="ECO:0000266"/>
    <property type="project" value="RGD"/>
</dbReference>
<dbReference type="GO" id="GO:0008195">
    <property type="term" value="F:phosphatidate phosphatase activity"/>
    <property type="evidence" value="ECO:0000250"/>
    <property type="project" value="UniProtKB"/>
</dbReference>
<dbReference type="GO" id="GO:0042392">
    <property type="term" value="F:sphingosine-1-phosphate phosphatase activity"/>
    <property type="evidence" value="ECO:0000250"/>
    <property type="project" value="UniProtKB"/>
</dbReference>
<dbReference type="GO" id="GO:0060020">
    <property type="term" value="P:Bergmann glial cell differentiation"/>
    <property type="evidence" value="ECO:0000266"/>
    <property type="project" value="RGD"/>
</dbReference>
<dbReference type="GO" id="GO:0001568">
    <property type="term" value="P:blood vessel development"/>
    <property type="evidence" value="ECO:0000266"/>
    <property type="project" value="RGD"/>
</dbReference>
<dbReference type="GO" id="GO:0007155">
    <property type="term" value="P:cell adhesion"/>
    <property type="evidence" value="ECO:0000266"/>
    <property type="project" value="RGD"/>
</dbReference>
<dbReference type="GO" id="GO:0098609">
    <property type="term" value="P:cell-cell adhesion"/>
    <property type="evidence" value="ECO:0000266"/>
    <property type="project" value="RGD"/>
</dbReference>
<dbReference type="GO" id="GO:0033631">
    <property type="term" value="P:cell-cell adhesion mediated by integrin"/>
    <property type="evidence" value="ECO:0000250"/>
    <property type="project" value="UniProtKB"/>
</dbReference>
<dbReference type="GO" id="GO:0006672">
    <property type="term" value="P:ceramide metabolic process"/>
    <property type="evidence" value="ECO:0000250"/>
    <property type="project" value="UniProtKB"/>
</dbReference>
<dbReference type="GO" id="GO:0001702">
    <property type="term" value="P:gastrulation with mouth forming second"/>
    <property type="evidence" value="ECO:0000266"/>
    <property type="project" value="RGD"/>
</dbReference>
<dbReference type="GO" id="GO:0007229">
    <property type="term" value="P:integrin-mediated signaling pathway"/>
    <property type="evidence" value="ECO:0000250"/>
    <property type="project" value="UniProtKB"/>
</dbReference>
<dbReference type="GO" id="GO:0046839">
    <property type="term" value="P:phospholipid dephosphorylation"/>
    <property type="evidence" value="ECO:0000250"/>
    <property type="project" value="UniProtKB"/>
</dbReference>
<dbReference type="GO" id="GO:0006644">
    <property type="term" value="P:phospholipid metabolic process"/>
    <property type="evidence" value="ECO:0000250"/>
    <property type="project" value="UniProtKB"/>
</dbReference>
<dbReference type="GO" id="GO:0010595">
    <property type="term" value="P:positive regulation of endothelial cell migration"/>
    <property type="evidence" value="ECO:0000266"/>
    <property type="project" value="RGD"/>
</dbReference>
<dbReference type="GO" id="GO:1904906">
    <property type="term" value="P:positive regulation of endothelial cell-matrix adhesion via fibronectin"/>
    <property type="evidence" value="ECO:0000266"/>
    <property type="project" value="RGD"/>
</dbReference>
<dbReference type="GO" id="GO:0034112">
    <property type="term" value="P:positive regulation of homotypic cell-cell adhesion"/>
    <property type="evidence" value="ECO:0000266"/>
    <property type="project" value="RGD"/>
</dbReference>
<dbReference type="GO" id="GO:1902533">
    <property type="term" value="P:positive regulation of intracellular signal transduction"/>
    <property type="evidence" value="ECO:0000266"/>
    <property type="project" value="RGD"/>
</dbReference>
<dbReference type="GO" id="GO:0045944">
    <property type="term" value="P:positive regulation of transcription by RNA polymerase II"/>
    <property type="evidence" value="ECO:0000266"/>
    <property type="project" value="RGD"/>
</dbReference>
<dbReference type="GO" id="GO:0050821">
    <property type="term" value="P:protein stabilization"/>
    <property type="evidence" value="ECO:0000266"/>
    <property type="project" value="RGD"/>
</dbReference>
<dbReference type="GO" id="GO:1902068">
    <property type="term" value="P:regulation of sphingolipid mediated signaling pathway"/>
    <property type="evidence" value="ECO:0000266"/>
    <property type="project" value="RGD"/>
</dbReference>
<dbReference type="GO" id="GO:0030111">
    <property type="term" value="P:regulation of Wnt signaling pathway"/>
    <property type="evidence" value="ECO:0000266"/>
    <property type="project" value="RGD"/>
</dbReference>
<dbReference type="GO" id="GO:0006890">
    <property type="term" value="P:retrograde vesicle-mediated transport, Golgi to endoplasmic reticulum"/>
    <property type="evidence" value="ECO:0000250"/>
    <property type="project" value="UniProtKB"/>
</dbReference>
<dbReference type="GO" id="GO:0007165">
    <property type="term" value="P:signal transduction"/>
    <property type="evidence" value="ECO:0000318"/>
    <property type="project" value="GO_Central"/>
</dbReference>
<dbReference type="GO" id="GO:0006670">
    <property type="term" value="P:sphingosine metabolic process"/>
    <property type="evidence" value="ECO:0000250"/>
    <property type="project" value="UniProtKB"/>
</dbReference>
<dbReference type="CDD" id="cd03384">
    <property type="entry name" value="PAP2_wunen"/>
    <property type="match status" value="1"/>
</dbReference>
<dbReference type="FunFam" id="1.20.144.10:FF:000013">
    <property type="entry name" value="Phospholipid phosphatase 3"/>
    <property type="match status" value="1"/>
</dbReference>
<dbReference type="Gene3D" id="1.20.144.10">
    <property type="entry name" value="Phosphatidic acid phosphatase type 2/haloperoxidase"/>
    <property type="match status" value="1"/>
</dbReference>
<dbReference type="InterPro" id="IPR036938">
    <property type="entry name" value="P_Acid_Pase_2/haloperoxi_sf"/>
</dbReference>
<dbReference type="InterPro" id="IPR000326">
    <property type="entry name" value="P_Acid_Pase_2/haloperoxidase"/>
</dbReference>
<dbReference type="InterPro" id="IPR043216">
    <property type="entry name" value="PA_PP_rel"/>
</dbReference>
<dbReference type="PANTHER" id="PTHR10165">
    <property type="entry name" value="LIPID PHOSPHATE PHOSPHATASE"/>
    <property type="match status" value="1"/>
</dbReference>
<dbReference type="PANTHER" id="PTHR10165:SF79">
    <property type="entry name" value="PHOSPHOLIPID PHOSPHATASE 3"/>
    <property type="match status" value="1"/>
</dbReference>
<dbReference type="Pfam" id="PF01569">
    <property type="entry name" value="PAP2"/>
    <property type="match status" value="1"/>
</dbReference>
<dbReference type="SMART" id="SM00014">
    <property type="entry name" value="acidPPc"/>
    <property type="match status" value="1"/>
</dbReference>
<dbReference type="SUPFAM" id="SSF48317">
    <property type="entry name" value="Acid phosphatase/Vanadium-dependent haloperoxidase"/>
    <property type="match status" value="1"/>
</dbReference>
<organism>
    <name type="scientific">Rattus norvegicus</name>
    <name type="common">Rat</name>
    <dbReference type="NCBI Taxonomy" id="10116"/>
    <lineage>
        <taxon>Eukaryota</taxon>
        <taxon>Metazoa</taxon>
        <taxon>Chordata</taxon>
        <taxon>Craniata</taxon>
        <taxon>Vertebrata</taxon>
        <taxon>Euteleostomi</taxon>
        <taxon>Mammalia</taxon>
        <taxon>Eutheria</taxon>
        <taxon>Euarchontoglires</taxon>
        <taxon>Glires</taxon>
        <taxon>Rodentia</taxon>
        <taxon>Myomorpha</taxon>
        <taxon>Muroidea</taxon>
        <taxon>Muridae</taxon>
        <taxon>Murinae</taxon>
        <taxon>Rattus</taxon>
    </lineage>
</organism>
<sequence length="312" mass="35318">MQSYKYDKAIVPESKNGGSPALNNNPRKGGSKRVLLICLDLFCLFMAALPFLIIETSTIKPYRRGFYCNDESIKYPLKVSETINDAVLCAVGIVIAILRIITGEFYRIYYLKEKSRSTIQNPYVAALYKQVGCFLFGCAISQSFTDIAKVSIGRLRPHFLSVCDPDFSQINCSEGYIQNYRCRGEDSKVQEARKSFFSGHASFSMFTMLYLVLYLQARFTWRGARLLRPLLQFTLLMMAFYTGLSRVSDYKHHPSDVLAGFAQGALVACCIVFFVSDLFKTKTTLSLPAPAIRREILSPVDIMDRSNHHNMV</sequence>
<accession>P97544</accession>
<reference key="1">
    <citation type="journal article" date="1996" name="J. Biol. Chem.">
        <title>The Dri 42 gene, whose expression is upregulated during epithelial differentiation, encodes a novel ER resident transmembrane protein.</title>
        <authorList>
            <person name="Barila D."/>
            <person name="Plateroti M."/>
            <person name="Nobili F."/>
            <person name="Muda A.O."/>
            <person name="Xie Y."/>
            <person name="Morimoto T."/>
            <person name="Perozzi G."/>
        </authorList>
    </citation>
    <scope>NUCLEOTIDE SEQUENCE [MRNA]</scope>
    <scope>SUBCELLULAR LOCATION</scope>
    <scope>TOPOLOGY</scope>
    <scope>GLYCOSYLATION</scope>
    <source>
        <strain>Wistar</strain>
        <tissue>Small intestine</tissue>
    </source>
</reference>
<reference key="2">
    <citation type="journal article" date="1994" name="Eur. J. Biochem.">
        <title>Subtractive hybridization cloning of novel genes differentially expressed during intestinal development.</title>
        <authorList>
            <person name="Barila D."/>
            <person name="Murgia C."/>
            <person name="Nobili F."/>
            <person name="Gaetani S."/>
            <person name="Perozzi G."/>
        </authorList>
    </citation>
    <scope>TISSUE SPECIFICITY</scope>
    <scope>DEVELOPMENTAL STAGE</scope>
</reference>
<reference key="3">
    <citation type="journal article" date="2001" name="Am. J. Physiol.">
        <title>Molecular cloning and expression of pulmonary lipid phosphate phosphohydrolases.</title>
        <authorList>
            <person name="Nanjundan M."/>
            <person name="Possmayer F."/>
        </authorList>
    </citation>
    <scope>TISSUE SPECIFICITY</scope>
    <source>
        <strain>Sprague-Dawley</strain>
    </source>
</reference>